<organism>
    <name type="scientific">Arabidopsis thaliana</name>
    <name type="common">Mouse-ear cress</name>
    <dbReference type="NCBI Taxonomy" id="3702"/>
    <lineage>
        <taxon>Eukaryota</taxon>
        <taxon>Viridiplantae</taxon>
        <taxon>Streptophyta</taxon>
        <taxon>Embryophyta</taxon>
        <taxon>Tracheophyta</taxon>
        <taxon>Spermatophyta</taxon>
        <taxon>Magnoliopsida</taxon>
        <taxon>eudicotyledons</taxon>
        <taxon>Gunneridae</taxon>
        <taxon>Pentapetalae</taxon>
        <taxon>rosids</taxon>
        <taxon>malvids</taxon>
        <taxon>Brassicales</taxon>
        <taxon>Brassicaceae</taxon>
        <taxon>Camelineae</taxon>
        <taxon>Arabidopsis</taxon>
    </lineage>
</organism>
<dbReference type="EMBL" id="AL132972">
    <property type="protein sequence ID" value="CAC07923.1"/>
    <property type="molecule type" value="Genomic_DNA"/>
</dbReference>
<dbReference type="EMBL" id="CP002686">
    <property type="protein sequence ID" value="AEE78932.1"/>
    <property type="molecule type" value="Genomic_DNA"/>
</dbReference>
<dbReference type="PIR" id="T46102">
    <property type="entry name" value="T46102"/>
</dbReference>
<dbReference type="RefSeq" id="NP_190800.1">
    <property type="nucleotide sequence ID" value="NM_115092.1"/>
</dbReference>
<dbReference type="FunCoup" id="Q9FT50">
    <property type="interactions" value="6"/>
</dbReference>
<dbReference type="PaxDb" id="3702-AT3G52320.1"/>
<dbReference type="EnsemblPlants" id="AT3G52320.1">
    <property type="protein sequence ID" value="AT3G52320.1"/>
    <property type="gene ID" value="AT3G52320"/>
</dbReference>
<dbReference type="GeneID" id="824397"/>
<dbReference type="Gramene" id="AT3G52320.1">
    <property type="protein sequence ID" value="AT3G52320.1"/>
    <property type="gene ID" value="AT3G52320"/>
</dbReference>
<dbReference type="KEGG" id="ath:AT3G52320"/>
<dbReference type="Araport" id="AT3G52320"/>
<dbReference type="TAIR" id="AT3G52320"/>
<dbReference type="HOGENOM" id="CLU_027176_8_2_1"/>
<dbReference type="InParanoid" id="Q9FT50"/>
<dbReference type="OMA" id="GLLCYRT"/>
<dbReference type="PhylomeDB" id="Q9FT50"/>
<dbReference type="PRO" id="PR:Q9FT50"/>
<dbReference type="Proteomes" id="UP000006548">
    <property type="component" value="Chromosome 3"/>
</dbReference>
<dbReference type="ExpressionAtlas" id="Q9FT50">
    <property type="expression patterns" value="baseline and differential"/>
</dbReference>
<dbReference type="CDD" id="cd22157">
    <property type="entry name" value="F-box_AtFBW1-like"/>
    <property type="match status" value="1"/>
</dbReference>
<dbReference type="Gene3D" id="1.20.1280.50">
    <property type="match status" value="1"/>
</dbReference>
<dbReference type="InterPro" id="IPR013187">
    <property type="entry name" value="F-box-assoc_dom_typ3"/>
</dbReference>
<dbReference type="InterPro" id="IPR017451">
    <property type="entry name" value="F-box-assoc_interact_dom"/>
</dbReference>
<dbReference type="InterPro" id="IPR036047">
    <property type="entry name" value="F-box-like_dom_sf"/>
</dbReference>
<dbReference type="InterPro" id="IPR001810">
    <property type="entry name" value="F-box_dom"/>
</dbReference>
<dbReference type="NCBIfam" id="TIGR01640">
    <property type="entry name" value="F_box_assoc_1"/>
    <property type="match status" value="1"/>
</dbReference>
<dbReference type="PANTHER" id="PTHR31111">
    <property type="entry name" value="BNAA05G37150D PROTEIN-RELATED"/>
    <property type="match status" value="1"/>
</dbReference>
<dbReference type="PANTHER" id="PTHR31111:SF25">
    <property type="entry name" value="F-BOX ASSOCIATED UBIQUITINATION EFFECTOR FAMILY PROTEIN"/>
    <property type="match status" value="1"/>
</dbReference>
<dbReference type="Pfam" id="PF00646">
    <property type="entry name" value="F-box"/>
    <property type="match status" value="1"/>
</dbReference>
<dbReference type="Pfam" id="PF08268">
    <property type="entry name" value="FBA_3"/>
    <property type="match status" value="1"/>
</dbReference>
<dbReference type="SMART" id="SM00256">
    <property type="entry name" value="FBOX"/>
    <property type="match status" value="1"/>
</dbReference>
<dbReference type="SUPFAM" id="SSF81383">
    <property type="entry name" value="F-box domain"/>
    <property type="match status" value="1"/>
</dbReference>
<dbReference type="PROSITE" id="PS50181">
    <property type="entry name" value="FBOX"/>
    <property type="match status" value="1"/>
</dbReference>
<keyword id="KW-1185">Reference proteome</keyword>
<gene>
    <name type="ordered locus">At3g52320</name>
    <name type="ORF">T25B15.90</name>
</gene>
<name>FB202_ARATH</name>
<evidence type="ECO:0000255" key="1">
    <source>
        <dbReference type="PROSITE-ProRule" id="PRU00080"/>
    </source>
</evidence>
<feature type="chain" id="PRO_0000283472" description="Putative F-box protein At3g52320">
    <location>
        <begin position="1"/>
        <end position="390"/>
    </location>
</feature>
<feature type="domain" description="F-box" evidence="1">
    <location>
        <begin position="21"/>
        <end position="71"/>
    </location>
</feature>
<accession>Q9FT50</accession>
<sequence>MGSSLCVAVRKKEKQKQKKTVVFLPEIPEEMLIDILIRLPAKSLMRFKCVSKLWLSLITSRYFTNRFFKPSSPSCLFAYLVDRENQSKYLLLQSSSSSRHDHSDTSVSVIDQHSTIPIMGGYLVNAARGLLCYRTGRRVKVCNPSTRQIVELPIMRSKTNVWNWFGHDPFHDEYKVLSLFWEVTKEQTVVRSEHQVLVLGVGASWRNTKSHHTPHRPFHPYSRGMTIDGVLYYSARTDANRCVLMSFDLSSEEFNLIELPFENWSRTIHMNYQGKVATCQYMRLASDGFVDVCVLEDADKSQWSNKKTFVLPISQMNFVHGDRLVVGASRDSGKVLMRKANLLRNQHARFFLYDMERNEIARRIEIRPSLLGSFNKTNQFLKVCYTFQTK</sequence>
<reference key="1">
    <citation type="journal article" date="2000" name="Nature">
        <title>Sequence and analysis of chromosome 3 of the plant Arabidopsis thaliana.</title>
        <authorList>
            <person name="Salanoubat M."/>
            <person name="Lemcke K."/>
            <person name="Rieger M."/>
            <person name="Ansorge W."/>
            <person name="Unseld M."/>
            <person name="Fartmann B."/>
            <person name="Valle G."/>
            <person name="Bloecker H."/>
            <person name="Perez-Alonso M."/>
            <person name="Obermaier B."/>
            <person name="Delseny M."/>
            <person name="Boutry M."/>
            <person name="Grivell L.A."/>
            <person name="Mache R."/>
            <person name="Puigdomenech P."/>
            <person name="De Simone V."/>
            <person name="Choisne N."/>
            <person name="Artiguenave F."/>
            <person name="Robert C."/>
            <person name="Brottier P."/>
            <person name="Wincker P."/>
            <person name="Cattolico L."/>
            <person name="Weissenbach J."/>
            <person name="Saurin W."/>
            <person name="Quetier F."/>
            <person name="Schaefer M."/>
            <person name="Mueller-Auer S."/>
            <person name="Gabel C."/>
            <person name="Fuchs M."/>
            <person name="Benes V."/>
            <person name="Wurmbach E."/>
            <person name="Drzonek H."/>
            <person name="Erfle H."/>
            <person name="Jordan N."/>
            <person name="Bangert S."/>
            <person name="Wiedelmann R."/>
            <person name="Kranz H."/>
            <person name="Voss H."/>
            <person name="Holland R."/>
            <person name="Brandt P."/>
            <person name="Nyakatura G."/>
            <person name="Vezzi A."/>
            <person name="D'Angelo M."/>
            <person name="Pallavicini A."/>
            <person name="Toppo S."/>
            <person name="Simionati B."/>
            <person name="Conrad A."/>
            <person name="Hornischer K."/>
            <person name="Kauer G."/>
            <person name="Loehnert T.-H."/>
            <person name="Nordsiek G."/>
            <person name="Reichelt J."/>
            <person name="Scharfe M."/>
            <person name="Schoen O."/>
            <person name="Bargues M."/>
            <person name="Terol J."/>
            <person name="Climent J."/>
            <person name="Navarro P."/>
            <person name="Collado C."/>
            <person name="Perez-Perez A."/>
            <person name="Ottenwaelder B."/>
            <person name="Duchemin D."/>
            <person name="Cooke R."/>
            <person name="Laudie M."/>
            <person name="Berger-Llauro C."/>
            <person name="Purnelle B."/>
            <person name="Masuy D."/>
            <person name="de Haan M."/>
            <person name="Maarse A.C."/>
            <person name="Alcaraz J.-P."/>
            <person name="Cottet A."/>
            <person name="Casacuberta E."/>
            <person name="Monfort A."/>
            <person name="Argiriou A."/>
            <person name="Flores M."/>
            <person name="Liguori R."/>
            <person name="Vitale D."/>
            <person name="Mannhaupt G."/>
            <person name="Haase D."/>
            <person name="Schoof H."/>
            <person name="Rudd S."/>
            <person name="Zaccaria P."/>
            <person name="Mewes H.-W."/>
            <person name="Mayer K.F.X."/>
            <person name="Kaul S."/>
            <person name="Town C.D."/>
            <person name="Koo H.L."/>
            <person name="Tallon L.J."/>
            <person name="Jenkins J."/>
            <person name="Rooney T."/>
            <person name="Rizzo M."/>
            <person name="Walts A."/>
            <person name="Utterback T."/>
            <person name="Fujii C.Y."/>
            <person name="Shea T.P."/>
            <person name="Creasy T.H."/>
            <person name="Haas B."/>
            <person name="Maiti R."/>
            <person name="Wu D."/>
            <person name="Peterson J."/>
            <person name="Van Aken S."/>
            <person name="Pai G."/>
            <person name="Militscher J."/>
            <person name="Sellers P."/>
            <person name="Gill J.E."/>
            <person name="Feldblyum T.V."/>
            <person name="Preuss D."/>
            <person name="Lin X."/>
            <person name="Nierman W.C."/>
            <person name="Salzberg S.L."/>
            <person name="White O."/>
            <person name="Venter J.C."/>
            <person name="Fraser C.M."/>
            <person name="Kaneko T."/>
            <person name="Nakamura Y."/>
            <person name="Sato S."/>
            <person name="Kato T."/>
            <person name="Asamizu E."/>
            <person name="Sasamoto S."/>
            <person name="Kimura T."/>
            <person name="Idesawa K."/>
            <person name="Kawashima K."/>
            <person name="Kishida Y."/>
            <person name="Kiyokawa C."/>
            <person name="Kohara M."/>
            <person name="Matsumoto M."/>
            <person name="Matsuno A."/>
            <person name="Muraki A."/>
            <person name="Nakayama S."/>
            <person name="Nakazaki N."/>
            <person name="Shinpo S."/>
            <person name="Takeuchi C."/>
            <person name="Wada T."/>
            <person name="Watanabe A."/>
            <person name="Yamada M."/>
            <person name="Yasuda M."/>
            <person name="Tabata S."/>
        </authorList>
    </citation>
    <scope>NUCLEOTIDE SEQUENCE [LARGE SCALE GENOMIC DNA]</scope>
    <source>
        <strain>cv. Columbia</strain>
    </source>
</reference>
<reference key="2">
    <citation type="journal article" date="2017" name="Plant J.">
        <title>Araport11: a complete reannotation of the Arabidopsis thaliana reference genome.</title>
        <authorList>
            <person name="Cheng C.Y."/>
            <person name="Krishnakumar V."/>
            <person name="Chan A.P."/>
            <person name="Thibaud-Nissen F."/>
            <person name="Schobel S."/>
            <person name="Town C.D."/>
        </authorList>
    </citation>
    <scope>GENOME REANNOTATION</scope>
    <source>
        <strain>cv. Columbia</strain>
    </source>
</reference>
<protein>
    <recommendedName>
        <fullName>Putative F-box protein At3g52320</fullName>
    </recommendedName>
</protein>
<proteinExistence type="predicted"/>